<sequence>MYAIIKTGGKQYRVTEGQMLKVEKLAQDVGQSVKFDDVLMVAAGDELHIGTPSVKDAAVTAEVVDQGRQAKIEIIKFKRRKHHMKRQGHRQDFTAVKITEIALGKAKKEVKTDGA</sequence>
<name>RL21_COXBU</name>
<gene>
    <name evidence="1" type="primary">rplU</name>
    <name type="ordered locus">CBU_0385</name>
</gene>
<accession>Q83EE0</accession>
<feature type="chain" id="PRO_0000269308" description="Large ribosomal subunit protein bL21">
    <location>
        <begin position="1"/>
        <end position="115"/>
    </location>
</feature>
<protein>
    <recommendedName>
        <fullName evidence="1">Large ribosomal subunit protein bL21</fullName>
    </recommendedName>
    <alternativeName>
        <fullName evidence="2">50S ribosomal protein L21</fullName>
    </alternativeName>
</protein>
<reference key="1">
    <citation type="journal article" date="2003" name="Proc. Natl. Acad. Sci. U.S.A.">
        <title>Complete genome sequence of the Q-fever pathogen, Coxiella burnetii.</title>
        <authorList>
            <person name="Seshadri R."/>
            <person name="Paulsen I.T."/>
            <person name="Eisen J.A."/>
            <person name="Read T.D."/>
            <person name="Nelson K.E."/>
            <person name="Nelson W.C."/>
            <person name="Ward N.L."/>
            <person name="Tettelin H."/>
            <person name="Davidsen T.M."/>
            <person name="Beanan M.J."/>
            <person name="DeBoy R.T."/>
            <person name="Daugherty S.C."/>
            <person name="Brinkac L.M."/>
            <person name="Madupu R."/>
            <person name="Dodson R.J."/>
            <person name="Khouri H.M."/>
            <person name="Lee K.H."/>
            <person name="Carty H.A."/>
            <person name="Scanlan D."/>
            <person name="Heinzen R.A."/>
            <person name="Thompson H.A."/>
            <person name="Samuel J.E."/>
            <person name="Fraser C.M."/>
            <person name="Heidelberg J.F."/>
        </authorList>
    </citation>
    <scope>NUCLEOTIDE SEQUENCE [LARGE SCALE GENOMIC DNA]</scope>
    <source>
        <strain>RSA 493 / Nine Mile phase I</strain>
    </source>
</reference>
<comment type="function">
    <text evidence="1">This protein binds to 23S rRNA in the presence of protein L20.</text>
</comment>
<comment type="subunit">
    <text evidence="1">Part of the 50S ribosomal subunit. Contacts protein L20.</text>
</comment>
<comment type="similarity">
    <text evidence="1">Belongs to the bacterial ribosomal protein bL21 family.</text>
</comment>
<comment type="sequence caution" evidence="2">
    <conflict type="erroneous initiation">
        <sequence resource="EMBL-CDS" id="AAO89938"/>
    </conflict>
</comment>
<evidence type="ECO:0000255" key="1">
    <source>
        <dbReference type="HAMAP-Rule" id="MF_01363"/>
    </source>
</evidence>
<evidence type="ECO:0000305" key="2"/>
<keyword id="KW-1185">Reference proteome</keyword>
<keyword id="KW-0687">Ribonucleoprotein</keyword>
<keyword id="KW-0689">Ribosomal protein</keyword>
<keyword id="KW-0694">RNA-binding</keyword>
<keyword id="KW-0699">rRNA-binding</keyword>
<dbReference type="EMBL" id="AE016828">
    <property type="protein sequence ID" value="AAO89938.2"/>
    <property type="status" value="ALT_INIT"/>
    <property type="molecule type" value="Genomic_DNA"/>
</dbReference>
<dbReference type="RefSeq" id="NP_819424.2">
    <property type="nucleotide sequence ID" value="NC_002971.3"/>
</dbReference>
<dbReference type="RefSeq" id="WP_010957542.1">
    <property type="nucleotide sequence ID" value="NC_002971.4"/>
</dbReference>
<dbReference type="RefSeq" id="WP_012220194.1">
    <property type="nucleotide sequence ID" value="NZ_CCYB01000056.1"/>
</dbReference>
<dbReference type="SMR" id="Q83EE0"/>
<dbReference type="STRING" id="227377.CBU_0385"/>
<dbReference type="EnsemblBacteria" id="AAO89938">
    <property type="protein sequence ID" value="AAO89938"/>
    <property type="gene ID" value="CBU_0385"/>
</dbReference>
<dbReference type="GeneID" id="1208268"/>
<dbReference type="KEGG" id="cbu:CBU_0385"/>
<dbReference type="PATRIC" id="fig|227377.7.peg.380"/>
<dbReference type="eggNOG" id="COG0261">
    <property type="taxonomic scope" value="Bacteria"/>
</dbReference>
<dbReference type="HOGENOM" id="CLU_061463_3_2_6"/>
<dbReference type="OrthoDB" id="9813334at2"/>
<dbReference type="Proteomes" id="UP000002671">
    <property type="component" value="Chromosome"/>
</dbReference>
<dbReference type="GO" id="GO:0005737">
    <property type="term" value="C:cytoplasm"/>
    <property type="evidence" value="ECO:0007669"/>
    <property type="project" value="UniProtKB-ARBA"/>
</dbReference>
<dbReference type="GO" id="GO:1990904">
    <property type="term" value="C:ribonucleoprotein complex"/>
    <property type="evidence" value="ECO:0007669"/>
    <property type="project" value="UniProtKB-KW"/>
</dbReference>
<dbReference type="GO" id="GO:0005840">
    <property type="term" value="C:ribosome"/>
    <property type="evidence" value="ECO:0007669"/>
    <property type="project" value="UniProtKB-KW"/>
</dbReference>
<dbReference type="GO" id="GO:0019843">
    <property type="term" value="F:rRNA binding"/>
    <property type="evidence" value="ECO:0007669"/>
    <property type="project" value="UniProtKB-UniRule"/>
</dbReference>
<dbReference type="GO" id="GO:0003735">
    <property type="term" value="F:structural constituent of ribosome"/>
    <property type="evidence" value="ECO:0000318"/>
    <property type="project" value="GO_Central"/>
</dbReference>
<dbReference type="GO" id="GO:0006412">
    <property type="term" value="P:translation"/>
    <property type="evidence" value="ECO:0007669"/>
    <property type="project" value="UniProtKB-UniRule"/>
</dbReference>
<dbReference type="HAMAP" id="MF_01363">
    <property type="entry name" value="Ribosomal_bL21"/>
    <property type="match status" value="1"/>
</dbReference>
<dbReference type="InterPro" id="IPR028909">
    <property type="entry name" value="bL21-like"/>
</dbReference>
<dbReference type="InterPro" id="IPR036164">
    <property type="entry name" value="bL21-like_sf"/>
</dbReference>
<dbReference type="InterPro" id="IPR001787">
    <property type="entry name" value="Ribosomal_bL21"/>
</dbReference>
<dbReference type="InterPro" id="IPR018258">
    <property type="entry name" value="Ribosomal_bL21_CS"/>
</dbReference>
<dbReference type="NCBIfam" id="TIGR00061">
    <property type="entry name" value="L21"/>
    <property type="match status" value="1"/>
</dbReference>
<dbReference type="PANTHER" id="PTHR21349">
    <property type="entry name" value="50S RIBOSOMAL PROTEIN L21"/>
    <property type="match status" value="1"/>
</dbReference>
<dbReference type="PANTHER" id="PTHR21349:SF0">
    <property type="entry name" value="LARGE RIBOSOMAL SUBUNIT PROTEIN BL21M"/>
    <property type="match status" value="1"/>
</dbReference>
<dbReference type="Pfam" id="PF00829">
    <property type="entry name" value="Ribosomal_L21p"/>
    <property type="match status" value="1"/>
</dbReference>
<dbReference type="SUPFAM" id="SSF141091">
    <property type="entry name" value="L21p-like"/>
    <property type="match status" value="1"/>
</dbReference>
<dbReference type="PROSITE" id="PS01169">
    <property type="entry name" value="RIBOSOMAL_L21"/>
    <property type="match status" value="1"/>
</dbReference>
<organism>
    <name type="scientific">Coxiella burnetii (strain RSA 493 / Nine Mile phase I)</name>
    <dbReference type="NCBI Taxonomy" id="227377"/>
    <lineage>
        <taxon>Bacteria</taxon>
        <taxon>Pseudomonadati</taxon>
        <taxon>Pseudomonadota</taxon>
        <taxon>Gammaproteobacteria</taxon>
        <taxon>Legionellales</taxon>
        <taxon>Coxiellaceae</taxon>
        <taxon>Coxiella</taxon>
    </lineage>
</organism>
<proteinExistence type="inferred from homology"/>